<comment type="function">
    <text evidence="1 4">Nucleolin is the major nucleolar protein of growing eukaryotic cells. It is found associated with intranucleolar chromatin and pre-ribosomal particles. It induces chromatin decondensation by binding to histone H1. It is thought to play a role in pre-rRNA transcription and ribosome assembly. May play a role in the process of transcriptional elongation (By similarity). Involved in phase separation into sub-nucleolar condensates (PubMed:36329008).</text>
</comment>
<comment type="subunit">
    <text evidence="1">Identified in an mRNP granule complex containing untranslated mRNAs.</text>
</comment>
<comment type="subcellular location">
    <subcellularLocation>
        <location evidence="4">Nucleus</location>
        <location evidence="4">Nucleolus</location>
    </subcellularLocation>
    <text evidence="4">Localizes to a sub-nucleolar compartment, the outer granular component (GC).</text>
</comment>
<comment type="domain">
    <text evidence="4">Arginine-glycine RGG-box region plays a role in sub-nucleolar compartmentalization (PubMed:36329008). Dispensable for nucleolar accumulation (PubMed:36329008).</text>
</comment>
<comment type="disruption phenotype">
    <text evidence="4">Deletion has minimal effects on fertility and embryonic viability, but results in delayed somatic development (PubMed:36329008). Exhibits a 37% decrease in the number of progeny per worm in a Brix domain-containing lpd-6 mutant background (PubMed:36329008).</text>
</comment>
<accession>O45181</accession>
<name>NUCL1_CAEEL</name>
<keyword id="KW-0539">Nucleus</keyword>
<keyword id="KW-1185">Reference proteome</keyword>
<keyword id="KW-0694">RNA-binding</keyword>
<gene>
    <name evidence="8" type="primary">nucl-1</name>
    <name evidence="8" type="ORF">K07H8.10</name>
</gene>
<sequence>MGFDSPRGRGGGGFRGGRGGGSGFTPRGGGGGFRGGDRGRSPGGFRGGDRGRSSSGFRGGDRGRSPGGFRGDREGGFSPRGRGGGFRGGDRGGFRGGDRGGSPWRGGDRGNFRGGDRGGSPWRGGDRGVANRGRGDFSGGSRGGNKFSPRGGGRGGFTPRGRGGNDFSPRGGRGNFQSRGGGSRVGFSDKRKQYDSDGDDDEEEEVPKKKLATGTPFAKQTKPVEDDSGEDEEDEEESDEEPQPPKKTAKSAIATAAEDSDDDEEDDDEEEEESDDDAPQVKKSVAVEEDEEDEEDEEEIEMDEEDEEEEEDEEETEPVAKTPAVKSSLKSVDSTKGKQVNLSKVATPTTVDKKAPATPHPAKTSKNAAGDVPKLNFDDDSDEEDEEDEEVEEEDEEEEEEEEDVPAKKAPVLKQSLSQIAQAIEEDSDDEDEDEEEEEDEEDEEEEEDTTNVPLIKSKADLLKQIAANRAAASAAQDSDEDEDEEDEEDVEEEDEEEEEEEDIPAVKPKVTEKQGGVKRKLDEPTVASKQVKSDGKSIISEEERRRQDRDSRSLFIKEIAKKAKDAEITGLVTGLDSFRRKKNSNFGWLVFNTVADCKKAHDVLSKSKIQGKALYVDFCLSESKAPKEHGVRPINPLQLFINALPGTCNNTDLKNIFRSSTDIKILHASGQPNSKKRAFITFGTVEDAQAAFAKSNGLKVNNHLVDVFYARHQETKVDVKPKKAATPAVQKKIVPKVAADSSGDDSEEVASSDEGIQEVEEEQPKQKKLVKKVEPKTIPRVQQKKPQFKKTGFKGKK</sequence>
<proteinExistence type="inferred from homology"/>
<dbReference type="EMBL" id="BX284604">
    <property type="protein sequence ID" value="CCD70608.1"/>
    <property type="molecule type" value="Genomic_DNA"/>
</dbReference>
<dbReference type="PIR" id="T33022">
    <property type="entry name" value="T33022"/>
</dbReference>
<dbReference type="RefSeq" id="NP_501391.1">
    <property type="nucleotide sequence ID" value="NM_068990.7"/>
</dbReference>
<dbReference type="SMR" id="O45181"/>
<dbReference type="FunCoup" id="O45181">
    <property type="interactions" value="1657"/>
</dbReference>
<dbReference type="STRING" id="6239.K07H8.10.2"/>
<dbReference type="PaxDb" id="6239-K07H8-10"/>
<dbReference type="PeptideAtlas" id="O45181"/>
<dbReference type="EnsemblMetazoa" id="K07H8.10.1">
    <property type="protein sequence ID" value="K07H8.10.1"/>
    <property type="gene ID" value="WBGene00019510"/>
</dbReference>
<dbReference type="GeneID" id="177621"/>
<dbReference type="KEGG" id="cel:CELE_K07H8.10"/>
<dbReference type="UCSC" id="K07H8.10.1">
    <property type="organism name" value="c. elegans"/>
</dbReference>
<dbReference type="AGR" id="WB:WBGene00019510"/>
<dbReference type="CTD" id="177621"/>
<dbReference type="WormBase" id="K07H8.10">
    <property type="protein sequence ID" value="CE18030"/>
    <property type="gene ID" value="WBGene00019510"/>
    <property type="gene designation" value="nucl-1"/>
</dbReference>
<dbReference type="eggNOG" id="KOG4210">
    <property type="taxonomic scope" value="Eukaryota"/>
</dbReference>
<dbReference type="HOGENOM" id="CLU_352425_0_0_1"/>
<dbReference type="InParanoid" id="O45181"/>
<dbReference type="OMA" id="KLYCFVQ"/>
<dbReference type="OrthoDB" id="167718at2759"/>
<dbReference type="Proteomes" id="UP000001940">
    <property type="component" value="Chromosome IV"/>
</dbReference>
<dbReference type="Bgee" id="WBGene00019510">
    <property type="expression patterns" value="Expressed in adult organism and 4 other cell types or tissues"/>
</dbReference>
<dbReference type="GO" id="GO:0005730">
    <property type="term" value="C:nucleolus"/>
    <property type="evidence" value="ECO:0000318"/>
    <property type="project" value="GO_Central"/>
</dbReference>
<dbReference type="GO" id="GO:0003723">
    <property type="term" value="F:RNA binding"/>
    <property type="evidence" value="ECO:0007669"/>
    <property type="project" value="UniProtKB-KW"/>
</dbReference>
<dbReference type="CDD" id="cd00590">
    <property type="entry name" value="RRM_SF"/>
    <property type="match status" value="1"/>
</dbReference>
<dbReference type="Gene3D" id="3.30.70.330">
    <property type="match status" value="2"/>
</dbReference>
<dbReference type="InterPro" id="IPR012677">
    <property type="entry name" value="Nucleotide-bd_a/b_plait_sf"/>
</dbReference>
<dbReference type="InterPro" id="IPR035979">
    <property type="entry name" value="RBD_domain_sf"/>
</dbReference>
<dbReference type="InterPro" id="IPR000504">
    <property type="entry name" value="RRM_dom"/>
</dbReference>
<dbReference type="InterPro" id="IPR051945">
    <property type="entry name" value="RRM_MRD1_RNA_proc_ribogen"/>
</dbReference>
<dbReference type="PANTHER" id="PTHR48039">
    <property type="entry name" value="RNA-BINDING MOTIF PROTEIN 14B"/>
    <property type="match status" value="1"/>
</dbReference>
<dbReference type="PANTHER" id="PTHR48039:SF4">
    <property type="entry name" value="RRM DOMAIN-CONTAINING PROTEIN"/>
    <property type="match status" value="1"/>
</dbReference>
<dbReference type="Pfam" id="PF00076">
    <property type="entry name" value="RRM_1"/>
    <property type="match status" value="1"/>
</dbReference>
<dbReference type="SMART" id="SM00360">
    <property type="entry name" value="RRM"/>
    <property type="match status" value="2"/>
</dbReference>
<dbReference type="SUPFAM" id="SSF54928">
    <property type="entry name" value="RNA-binding domain, RBD"/>
    <property type="match status" value="1"/>
</dbReference>
<dbReference type="PROSITE" id="PS50102">
    <property type="entry name" value="RRM"/>
    <property type="match status" value="1"/>
</dbReference>
<protein>
    <recommendedName>
        <fullName evidence="8">Nucleolin homolog 1</fullName>
    </recommendedName>
    <alternativeName>
        <fullName evidence="6">RRM domain-containing protein</fullName>
    </alternativeName>
</protein>
<organism evidence="7">
    <name type="scientific">Caenorhabditis elegans</name>
    <dbReference type="NCBI Taxonomy" id="6239"/>
    <lineage>
        <taxon>Eukaryota</taxon>
        <taxon>Metazoa</taxon>
        <taxon>Ecdysozoa</taxon>
        <taxon>Nematoda</taxon>
        <taxon>Chromadorea</taxon>
        <taxon>Rhabditida</taxon>
        <taxon>Rhabditina</taxon>
        <taxon>Rhabditomorpha</taxon>
        <taxon>Rhabditoidea</taxon>
        <taxon>Rhabditidae</taxon>
        <taxon>Peloderinae</taxon>
        <taxon>Caenorhabditis</taxon>
    </lineage>
</organism>
<reference evidence="7" key="1">
    <citation type="journal article" date="1998" name="Science">
        <title>Genome sequence of the nematode C. elegans: a platform for investigating biology.</title>
        <authorList>
            <consortium name="The C. elegans sequencing consortium"/>
        </authorList>
    </citation>
    <scope>NUCLEOTIDE SEQUENCE [LARGE SCALE GENOMIC DNA]</scope>
    <source>
        <strain evidence="7">Bristol N2</strain>
    </source>
</reference>
<reference evidence="5" key="2">
    <citation type="journal article" date="2022" name="Nat. Commun.">
        <title>RG/RGG repeats in the C. elegans homologs of Nucleolin and GAR1 contribute to sub-nucleolar phase separation.</title>
        <authorList>
            <person name="Spaulding E.L."/>
            <person name="Feidler A.M."/>
            <person name="Cook L.A."/>
            <person name="Updike D.L."/>
        </authorList>
    </citation>
    <scope>FUNCTION</scope>
    <scope>SUBCELLULAR LOCATION</scope>
    <scope>DOMAIN</scope>
    <scope>DISRUPTION PHENOTYPE</scope>
</reference>
<feature type="chain" id="PRO_0000461337" description="Nucleolin homolog 1">
    <location>
        <begin position="1"/>
        <end position="798"/>
    </location>
</feature>
<feature type="domain" description="RRM" evidence="2">
    <location>
        <begin position="638"/>
        <end position="713"/>
    </location>
</feature>
<feature type="region of interest" description="Disordered" evidence="3">
    <location>
        <begin position="1"/>
        <end position="548"/>
    </location>
</feature>
<feature type="region of interest" description="Disordered" evidence="3">
    <location>
        <begin position="736"/>
        <end position="798"/>
    </location>
</feature>
<feature type="compositionally biased region" description="Gly residues" evidence="3">
    <location>
        <begin position="8"/>
        <end position="34"/>
    </location>
</feature>
<feature type="compositionally biased region" description="Basic and acidic residues" evidence="3">
    <location>
        <begin position="59"/>
        <end position="75"/>
    </location>
</feature>
<feature type="compositionally biased region" description="Basic and acidic residues" evidence="3">
    <location>
        <begin position="88"/>
        <end position="98"/>
    </location>
</feature>
<feature type="compositionally biased region" description="Basic and acidic residues" evidence="3">
    <location>
        <begin position="106"/>
        <end position="116"/>
    </location>
</feature>
<feature type="compositionally biased region" description="Gly residues" evidence="3">
    <location>
        <begin position="150"/>
        <end position="164"/>
    </location>
</feature>
<feature type="compositionally biased region" description="Gly residues" evidence="3">
    <location>
        <begin position="171"/>
        <end position="184"/>
    </location>
</feature>
<feature type="compositionally biased region" description="Acidic residues" evidence="3">
    <location>
        <begin position="196"/>
        <end position="205"/>
    </location>
</feature>
<feature type="compositionally biased region" description="Acidic residues" evidence="3">
    <location>
        <begin position="226"/>
        <end position="242"/>
    </location>
</feature>
<feature type="compositionally biased region" description="Acidic residues" evidence="3">
    <location>
        <begin position="258"/>
        <end position="278"/>
    </location>
</feature>
<feature type="compositionally biased region" description="Acidic residues" evidence="3">
    <location>
        <begin position="287"/>
        <end position="317"/>
    </location>
</feature>
<feature type="compositionally biased region" description="Polar residues" evidence="3">
    <location>
        <begin position="328"/>
        <end position="350"/>
    </location>
</feature>
<feature type="compositionally biased region" description="Acidic residues" evidence="3">
    <location>
        <begin position="378"/>
        <end position="404"/>
    </location>
</feature>
<feature type="compositionally biased region" description="Acidic residues" evidence="3">
    <location>
        <begin position="424"/>
        <end position="450"/>
    </location>
</feature>
<feature type="compositionally biased region" description="Low complexity" evidence="3">
    <location>
        <begin position="467"/>
        <end position="476"/>
    </location>
</feature>
<feature type="compositionally biased region" description="Acidic residues" evidence="3">
    <location>
        <begin position="478"/>
        <end position="504"/>
    </location>
</feature>
<feature type="compositionally biased region" description="Basic and acidic residues" evidence="3">
    <location>
        <begin position="532"/>
        <end position="548"/>
    </location>
</feature>
<feature type="compositionally biased region" description="Acidic residues" evidence="3">
    <location>
        <begin position="743"/>
        <end position="762"/>
    </location>
</feature>
<feature type="compositionally biased region" description="Basic residues" evidence="3">
    <location>
        <begin position="783"/>
        <end position="798"/>
    </location>
</feature>
<evidence type="ECO:0000250" key="1">
    <source>
        <dbReference type="UniProtKB" id="P19338"/>
    </source>
</evidence>
<evidence type="ECO:0000255" key="2">
    <source>
        <dbReference type="PROSITE-ProRule" id="PRU00176"/>
    </source>
</evidence>
<evidence type="ECO:0000256" key="3">
    <source>
        <dbReference type="SAM" id="MobiDB-lite"/>
    </source>
</evidence>
<evidence type="ECO:0000269" key="4">
    <source>
    </source>
</evidence>
<evidence type="ECO:0000305" key="5"/>
<evidence type="ECO:0000312" key="6">
    <source>
        <dbReference type="EMBL" id="CCD70608.1"/>
    </source>
</evidence>
<evidence type="ECO:0000312" key="7">
    <source>
        <dbReference type="Proteomes" id="UP000001940"/>
    </source>
</evidence>
<evidence type="ECO:0000312" key="8">
    <source>
        <dbReference type="WormBase" id="K07H8.10"/>
    </source>
</evidence>